<organism>
    <name type="scientific">Acanthamoeba polyphaga mimivirus</name>
    <name type="common">APMV</name>
    <dbReference type="NCBI Taxonomy" id="212035"/>
    <lineage>
        <taxon>Viruses</taxon>
        <taxon>Varidnaviria</taxon>
        <taxon>Bamfordvirae</taxon>
        <taxon>Nucleocytoviricota</taxon>
        <taxon>Megaviricetes</taxon>
        <taxon>Imitervirales</taxon>
        <taxon>Mimiviridae</taxon>
        <taxon>Megamimivirinae</taxon>
        <taxon>Mimivirus</taxon>
        <taxon>Mimivirus bradfordmassiliense</taxon>
    </lineage>
</organism>
<sequence>MKEAVKNVKPKVPAKKRIITGSKTKKKVFVKKKPPDKKPLKKPVKKTVKTDKPKSIYVPNKDLKISKWIPTPKKEFTEIETNSWYEHRKFENPNKSPVQTYNKIVPVVPPESIKQQNLANKRKKTNRPIVFISSEKIRIYPTKDQQKILQTWFRLFAYMYNCTIDYINSKKVVLESGRINVAATRKVCNKISVRKAQKTIRDNLIQSTNPSIMTHIIDEAIGLACSNYKTCLTNYIERHIKKFDIKPWNMSKRKKIIIIEANFFKKGTFCPTVFPKMESSKPLTMIDKTVTLQYDSDTRKYILFVPRVTPKYSVNKEKNSCGIDPGLRDFLTVYSENETQSICPIEIVVNTTKNEYKKIDKINEIIKTKPNLNSKRKKKLNRGLRKYHRRVTNKMKDMHYKVSHELVNTFDKICIGKLNVKSILSKANTVLKSALKRKLATLSFYRFTQRLTHMGYKYGTEVVNVNEYLTTKTCSNCGKIKDLGASKIYECESCGMYADRDENAAKNILKVGLKPWYKQK</sequence>
<comment type="similarity">
    <text evidence="3">In the central section; belongs to the transposase 2 family.</text>
</comment>
<comment type="similarity">
    <text evidence="3">In the C-terminal section; belongs to the transposase 35 family.</text>
</comment>
<dbReference type="EMBL" id="AY653733">
    <property type="protein sequence ID" value="AAV50354.1"/>
    <property type="molecule type" value="Genomic_DNA"/>
</dbReference>
<dbReference type="PDB" id="9B0L">
    <property type="method" value="EM"/>
    <property type="resolution" value="2.99 A"/>
    <property type="chains" value="P=1-520"/>
</dbReference>
<dbReference type="PDBsum" id="9B0L"/>
<dbReference type="EMDB" id="EMD-44046"/>
<dbReference type="SMR" id="Q5UPF5"/>
<dbReference type="KEGG" id="vg:9924676"/>
<dbReference type="OrthoDB" id="3397at10239"/>
<dbReference type="Proteomes" id="UP000001134">
    <property type="component" value="Genome"/>
</dbReference>
<dbReference type="GO" id="GO:0003677">
    <property type="term" value="F:DNA binding"/>
    <property type="evidence" value="ECO:0007669"/>
    <property type="project" value="UniProtKB-KW"/>
</dbReference>
<dbReference type="GO" id="GO:0046872">
    <property type="term" value="F:metal ion binding"/>
    <property type="evidence" value="ECO:0007669"/>
    <property type="project" value="UniProtKB-KW"/>
</dbReference>
<dbReference type="GO" id="GO:0006310">
    <property type="term" value="P:DNA recombination"/>
    <property type="evidence" value="ECO:0007669"/>
    <property type="project" value="UniProtKB-KW"/>
</dbReference>
<dbReference type="GO" id="GO:0032196">
    <property type="term" value="P:transposition"/>
    <property type="evidence" value="ECO:0007669"/>
    <property type="project" value="UniProtKB-KW"/>
</dbReference>
<dbReference type="InterPro" id="IPR010095">
    <property type="entry name" value="Cas12f1-like_TNB"/>
</dbReference>
<dbReference type="InterPro" id="IPR051491">
    <property type="entry name" value="Recombinase/Transposase-rel"/>
</dbReference>
<dbReference type="InterPro" id="IPR001959">
    <property type="entry name" value="Transposase"/>
</dbReference>
<dbReference type="NCBIfam" id="NF040570">
    <property type="entry name" value="guided_TnpB"/>
    <property type="match status" value="1"/>
</dbReference>
<dbReference type="NCBIfam" id="TIGR01766">
    <property type="entry name" value="IS200/IS605 family accessory protein TnpB-like domain"/>
    <property type="match status" value="1"/>
</dbReference>
<dbReference type="PANTHER" id="PTHR36172">
    <property type="match status" value="1"/>
</dbReference>
<dbReference type="PANTHER" id="PTHR36172:SF1">
    <property type="entry name" value="RESOLVASE-RELATED"/>
    <property type="match status" value="1"/>
</dbReference>
<dbReference type="Pfam" id="PF07282">
    <property type="entry name" value="Cas12f1-like_TNB"/>
    <property type="match status" value="1"/>
</dbReference>
<dbReference type="Pfam" id="PF01385">
    <property type="entry name" value="OrfB_IS605"/>
    <property type="match status" value="1"/>
</dbReference>
<protein>
    <recommendedName>
        <fullName>TnpB-like protein L79</fullName>
    </recommendedName>
</protein>
<keyword id="KW-0002">3D-structure</keyword>
<keyword id="KW-0233">DNA recombination</keyword>
<keyword id="KW-0238">DNA-binding</keyword>
<keyword id="KW-0479">Metal-binding</keyword>
<keyword id="KW-1185">Reference proteome</keyword>
<keyword id="KW-0815">Transposition</keyword>
<keyword id="KW-0862">Zinc</keyword>
<reference key="1">
    <citation type="journal article" date="2004" name="Science">
        <title>The 1.2-megabase genome sequence of Mimivirus.</title>
        <authorList>
            <person name="Raoult D."/>
            <person name="Audic S."/>
            <person name="Robert C."/>
            <person name="Abergel C."/>
            <person name="Renesto P."/>
            <person name="Ogata H."/>
            <person name="La Scola B."/>
            <person name="Susan M."/>
            <person name="Claverie J.-M."/>
        </authorList>
    </citation>
    <scope>NUCLEOTIDE SEQUENCE [LARGE SCALE GENOMIC DNA]</scope>
    <source>
        <strain>Rowbotham-Bradford</strain>
    </source>
</reference>
<organismHost>
    <name type="scientific">Acanthamoeba polyphaga</name>
    <name type="common">Amoeba</name>
    <dbReference type="NCBI Taxonomy" id="5757"/>
</organismHost>
<evidence type="ECO:0000250" key="1">
    <source>
        <dbReference type="UniProtKB" id="Q7DF80"/>
    </source>
</evidence>
<evidence type="ECO:0000256" key="2">
    <source>
        <dbReference type="SAM" id="MobiDB-lite"/>
    </source>
</evidence>
<evidence type="ECO:0000305" key="3"/>
<evidence type="ECO:0007829" key="4">
    <source>
        <dbReference type="PDB" id="9B0L"/>
    </source>
</evidence>
<name>YL079_MIMIV</name>
<feature type="chain" id="PRO_0000075538" description="TnpB-like protein L79">
    <location>
        <begin position="1"/>
        <end position="520"/>
    </location>
</feature>
<feature type="region of interest" description="Disordered" evidence="2">
    <location>
        <begin position="21"/>
        <end position="52"/>
    </location>
</feature>
<feature type="compositionally biased region" description="Basic residues" evidence="2">
    <location>
        <begin position="21"/>
        <end position="47"/>
    </location>
</feature>
<feature type="binding site" evidence="1">
    <location>
        <position position="474"/>
    </location>
    <ligand>
        <name>Zn(2+)</name>
        <dbReference type="ChEBI" id="CHEBI:29105"/>
    </ligand>
</feature>
<feature type="binding site" evidence="1">
    <location>
        <position position="477"/>
    </location>
    <ligand>
        <name>Zn(2+)</name>
        <dbReference type="ChEBI" id="CHEBI:29105"/>
    </ligand>
</feature>
<feature type="binding site" evidence="1">
    <location>
        <position position="491"/>
    </location>
    <ligand>
        <name>Zn(2+)</name>
        <dbReference type="ChEBI" id="CHEBI:29105"/>
    </ligand>
</feature>
<feature type="binding site" evidence="1">
    <location>
        <position position="494"/>
    </location>
    <ligand>
        <name>Zn(2+)</name>
        <dbReference type="ChEBI" id="CHEBI:29105"/>
    </ligand>
</feature>
<feature type="helix" evidence="4">
    <location>
        <begin position="60"/>
        <end position="62"/>
    </location>
</feature>
<feature type="strand" evidence="4">
    <location>
        <begin position="77"/>
        <end position="79"/>
    </location>
</feature>
<feature type="strand" evidence="4">
    <location>
        <begin position="82"/>
        <end position="85"/>
    </location>
</feature>
<feature type="strand" evidence="4">
    <location>
        <begin position="87"/>
        <end position="91"/>
    </location>
</feature>
<feature type="strand" evidence="4">
    <location>
        <begin position="101"/>
        <end position="106"/>
    </location>
</feature>
<feature type="helix" evidence="4">
    <location>
        <begin position="110"/>
        <end position="121"/>
    </location>
</feature>
<feature type="strand" evidence="4">
    <location>
        <begin position="136"/>
        <end position="139"/>
    </location>
</feature>
<feature type="helix" evidence="4">
    <location>
        <begin position="143"/>
        <end position="170"/>
    </location>
</feature>
<feature type="strand" evidence="4">
    <location>
        <begin position="175"/>
        <end position="179"/>
    </location>
</feature>
<feature type="helix" evidence="4">
    <location>
        <begin position="181"/>
        <end position="187"/>
    </location>
</feature>
<feature type="helix" evidence="4">
    <location>
        <begin position="190"/>
        <end position="196"/>
    </location>
</feature>
<feature type="helix" evidence="4">
    <location>
        <begin position="198"/>
        <end position="205"/>
    </location>
</feature>
<feature type="strand" evidence="4">
    <location>
        <begin position="208"/>
        <end position="210"/>
    </location>
</feature>
<feature type="helix" evidence="4">
    <location>
        <begin position="214"/>
        <end position="236"/>
    </location>
</feature>
<feature type="strand" evidence="4">
    <location>
        <begin position="253"/>
        <end position="259"/>
    </location>
</feature>
<feature type="helix" evidence="4">
    <location>
        <begin position="261"/>
        <end position="263"/>
    </location>
</feature>
<feature type="strand" evidence="4">
    <location>
        <begin position="268"/>
        <end position="270"/>
    </location>
</feature>
<feature type="turn" evidence="4">
    <location>
        <begin position="271"/>
        <end position="273"/>
    </location>
</feature>
<feature type="strand" evidence="4">
    <location>
        <begin position="279"/>
        <end position="281"/>
    </location>
</feature>
<feature type="strand" evidence="4">
    <location>
        <begin position="283"/>
        <end position="285"/>
    </location>
</feature>
<feature type="strand" evidence="4">
    <location>
        <begin position="290"/>
        <end position="295"/>
    </location>
</feature>
<feature type="turn" evidence="4">
    <location>
        <begin position="296"/>
        <end position="299"/>
    </location>
</feature>
<feature type="strand" evidence="4">
    <location>
        <begin position="300"/>
        <end position="304"/>
    </location>
</feature>
<feature type="strand" evidence="4">
    <location>
        <begin position="312"/>
        <end position="316"/>
    </location>
</feature>
<feature type="strand" evidence="4">
    <location>
        <begin position="320"/>
        <end position="325"/>
    </location>
</feature>
<feature type="strand" evidence="4">
    <location>
        <begin position="327"/>
        <end position="335"/>
    </location>
</feature>
<feature type="strand" evidence="4">
    <location>
        <begin position="338"/>
        <end position="342"/>
    </location>
</feature>
<feature type="helix" evidence="4">
    <location>
        <begin position="345"/>
        <end position="368"/>
    </location>
</feature>
<feature type="helix" evidence="4">
    <location>
        <begin position="374"/>
        <end position="409"/>
    </location>
</feature>
<feature type="strand" evidence="4">
    <location>
        <begin position="411"/>
        <end position="416"/>
    </location>
</feature>
<feature type="helix" evidence="4">
    <location>
        <begin position="420"/>
        <end position="424"/>
    </location>
</feature>
<feature type="helix" evidence="4">
    <location>
        <begin position="433"/>
        <end position="442"/>
    </location>
</feature>
<feature type="helix" evidence="4">
    <location>
        <begin position="444"/>
        <end position="457"/>
    </location>
</feature>
<feature type="strand" evidence="4">
    <location>
        <begin position="461"/>
        <end position="465"/>
    </location>
</feature>
<feature type="turn" evidence="4">
    <location>
        <begin position="470"/>
        <end position="472"/>
    </location>
</feature>
<feature type="strand" evidence="4">
    <location>
        <begin position="475"/>
        <end position="477"/>
    </location>
</feature>
<feature type="strand" evidence="4">
    <location>
        <begin position="487"/>
        <end position="490"/>
    </location>
</feature>
<feature type="turn" evidence="4">
    <location>
        <begin position="492"/>
        <end position="494"/>
    </location>
</feature>
<feature type="strand" evidence="4">
    <location>
        <begin position="497"/>
        <end position="499"/>
    </location>
</feature>
<feature type="helix" evidence="4">
    <location>
        <begin position="500"/>
        <end position="513"/>
    </location>
</feature>
<accession>Q5UPF5</accession>
<proteinExistence type="evidence at protein level"/>
<gene>
    <name type="ordered locus">MIMI_L79</name>
</gene>